<sequence>MGRERVTVVGGGLAGSEAAWRLAQGGVEVELVEMKPGRRSPAHVLDGLAELVCSNSLRSDNPHNAVGLLHEELRRLGSLVLSAADATRVPAGDALAVDRERFSALVTGRLRGHPLVRVRQEELLRLPEGPGLTLVATGPLTGDALAADVAALAGGRLHFYDAIAPIVAADSIDMSIAYARSRYGKGSGDDYLNLPFDEGQYRAFVGALLAGEKVAAHDFEEPRYFEGCLPIEVMAERGADVLAYGPMKPVGLEDPRTGRRPFAVVQLRREDVAGTAYNLVGFQTRLTWTEQRRILREYVPGLAGAEFVRLGQIHRNTFLEAPRVLAPDLSARERPHLFFAGQITGVEGYVESAACGHLAARAMLDRLAGRPFLPPPAATALGALHRHLTGEAHPPGYDYQPTNVVFALFPPLTGRHRGKAARKDAHAERARKEIAPWIDPWTHTARGAAAP</sequence>
<proteinExistence type="inferred from homology"/>
<reference key="1">
    <citation type="journal article" date="2015" name="Genome Announc.">
        <title>Complete genome sequence of Anaeromyxobacter sp. Fw109-5, an anaerobic, metal-reducing bacterium isolated from a contaminated subsurface environment.</title>
        <authorList>
            <person name="Hwang C."/>
            <person name="Copeland A."/>
            <person name="Lucas S."/>
            <person name="Lapidus A."/>
            <person name="Barry K."/>
            <person name="Glavina Del Rio T."/>
            <person name="Dalin E."/>
            <person name="Tice H."/>
            <person name="Pitluck S."/>
            <person name="Sims D."/>
            <person name="Brettin T."/>
            <person name="Bruce D.C."/>
            <person name="Detter J.C."/>
            <person name="Han C.S."/>
            <person name="Schmutz J."/>
            <person name="Larimer F.W."/>
            <person name="Land M.L."/>
            <person name="Hauser L.J."/>
            <person name="Kyrpides N."/>
            <person name="Lykidis A."/>
            <person name="Richardson P."/>
            <person name="Belieav A."/>
            <person name="Sanford R.A."/>
            <person name="Loeffler F.E."/>
            <person name="Fields M.W."/>
        </authorList>
    </citation>
    <scope>NUCLEOTIDE SEQUENCE [LARGE SCALE GENOMIC DNA]</scope>
    <source>
        <strain>Fw109-5</strain>
    </source>
</reference>
<accession>A7HDU6</accession>
<comment type="function">
    <text evidence="1">Catalyzes the folate-dependent formation of 5-methyl-uridine at position 54 (M-5-U54) in all tRNAs.</text>
</comment>
<comment type="catalytic activity">
    <reaction evidence="1">
        <text>uridine(54) in tRNA + (6R)-5,10-methylene-5,6,7,8-tetrahydrofolate + NADH + H(+) = 5-methyluridine(54) in tRNA + (6S)-5,6,7,8-tetrahydrofolate + NAD(+)</text>
        <dbReference type="Rhea" id="RHEA:16873"/>
        <dbReference type="Rhea" id="RHEA-COMP:10167"/>
        <dbReference type="Rhea" id="RHEA-COMP:10193"/>
        <dbReference type="ChEBI" id="CHEBI:15378"/>
        <dbReference type="ChEBI" id="CHEBI:15636"/>
        <dbReference type="ChEBI" id="CHEBI:57453"/>
        <dbReference type="ChEBI" id="CHEBI:57540"/>
        <dbReference type="ChEBI" id="CHEBI:57945"/>
        <dbReference type="ChEBI" id="CHEBI:65315"/>
        <dbReference type="ChEBI" id="CHEBI:74447"/>
        <dbReference type="EC" id="2.1.1.74"/>
    </reaction>
</comment>
<comment type="catalytic activity">
    <reaction evidence="1">
        <text>uridine(54) in tRNA + (6R)-5,10-methylene-5,6,7,8-tetrahydrofolate + NADPH + H(+) = 5-methyluridine(54) in tRNA + (6S)-5,6,7,8-tetrahydrofolate + NADP(+)</text>
        <dbReference type="Rhea" id="RHEA:62372"/>
        <dbReference type="Rhea" id="RHEA-COMP:10167"/>
        <dbReference type="Rhea" id="RHEA-COMP:10193"/>
        <dbReference type="ChEBI" id="CHEBI:15378"/>
        <dbReference type="ChEBI" id="CHEBI:15636"/>
        <dbReference type="ChEBI" id="CHEBI:57453"/>
        <dbReference type="ChEBI" id="CHEBI:57783"/>
        <dbReference type="ChEBI" id="CHEBI:58349"/>
        <dbReference type="ChEBI" id="CHEBI:65315"/>
        <dbReference type="ChEBI" id="CHEBI:74447"/>
        <dbReference type="EC" id="2.1.1.74"/>
    </reaction>
</comment>
<comment type="cofactor">
    <cofactor evidence="1">
        <name>FAD</name>
        <dbReference type="ChEBI" id="CHEBI:57692"/>
    </cofactor>
</comment>
<comment type="subcellular location">
    <subcellularLocation>
        <location evidence="1">Cytoplasm</location>
    </subcellularLocation>
</comment>
<comment type="similarity">
    <text evidence="1">Belongs to the MnmG family. TrmFO subfamily.</text>
</comment>
<dbReference type="EC" id="2.1.1.74" evidence="1"/>
<dbReference type="EMBL" id="CP000769">
    <property type="protein sequence ID" value="ABS26892.1"/>
    <property type="molecule type" value="Genomic_DNA"/>
</dbReference>
<dbReference type="RefSeq" id="WP_012097493.1">
    <property type="nucleotide sequence ID" value="NC_009675.1"/>
</dbReference>
<dbReference type="SMR" id="A7HDU6"/>
<dbReference type="STRING" id="404589.Anae109_2691"/>
<dbReference type="KEGG" id="afw:Anae109_2691"/>
<dbReference type="eggNOG" id="COG1206">
    <property type="taxonomic scope" value="Bacteria"/>
</dbReference>
<dbReference type="HOGENOM" id="CLU_033057_1_0_7"/>
<dbReference type="OrthoDB" id="9803114at2"/>
<dbReference type="Proteomes" id="UP000006382">
    <property type="component" value="Chromosome"/>
</dbReference>
<dbReference type="GO" id="GO:0005829">
    <property type="term" value="C:cytosol"/>
    <property type="evidence" value="ECO:0007669"/>
    <property type="project" value="TreeGrafter"/>
</dbReference>
<dbReference type="GO" id="GO:0050660">
    <property type="term" value="F:flavin adenine dinucleotide binding"/>
    <property type="evidence" value="ECO:0007669"/>
    <property type="project" value="UniProtKB-UniRule"/>
</dbReference>
<dbReference type="GO" id="GO:0047151">
    <property type="term" value="F:tRNA (uracil(54)-C5)-methyltransferase activity, 5,10-methylenetetrahydrofolate-dependent"/>
    <property type="evidence" value="ECO:0007669"/>
    <property type="project" value="UniProtKB-UniRule"/>
</dbReference>
<dbReference type="GO" id="GO:0030488">
    <property type="term" value="P:tRNA methylation"/>
    <property type="evidence" value="ECO:0007669"/>
    <property type="project" value="TreeGrafter"/>
</dbReference>
<dbReference type="GO" id="GO:0002098">
    <property type="term" value="P:tRNA wobble uridine modification"/>
    <property type="evidence" value="ECO:0007669"/>
    <property type="project" value="TreeGrafter"/>
</dbReference>
<dbReference type="Gene3D" id="3.50.50.60">
    <property type="entry name" value="FAD/NAD(P)-binding domain"/>
    <property type="match status" value="2"/>
</dbReference>
<dbReference type="HAMAP" id="MF_01037">
    <property type="entry name" value="TrmFO"/>
    <property type="match status" value="1"/>
</dbReference>
<dbReference type="InterPro" id="IPR036188">
    <property type="entry name" value="FAD/NAD-bd_sf"/>
</dbReference>
<dbReference type="InterPro" id="IPR002218">
    <property type="entry name" value="MnmG-rel"/>
</dbReference>
<dbReference type="InterPro" id="IPR040131">
    <property type="entry name" value="MnmG_N"/>
</dbReference>
<dbReference type="InterPro" id="IPR004417">
    <property type="entry name" value="TrmFO"/>
</dbReference>
<dbReference type="NCBIfam" id="TIGR00137">
    <property type="entry name" value="gid_trmFO"/>
    <property type="match status" value="1"/>
</dbReference>
<dbReference type="NCBIfam" id="NF003739">
    <property type="entry name" value="PRK05335.1"/>
    <property type="match status" value="1"/>
</dbReference>
<dbReference type="PANTHER" id="PTHR11806">
    <property type="entry name" value="GLUCOSE INHIBITED DIVISION PROTEIN A"/>
    <property type="match status" value="1"/>
</dbReference>
<dbReference type="PANTHER" id="PTHR11806:SF2">
    <property type="entry name" value="METHYLENETETRAHYDROFOLATE--TRNA-(URACIL-5-)-METHYLTRANSFERASE TRMFO"/>
    <property type="match status" value="1"/>
</dbReference>
<dbReference type="Pfam" id="PF01134">
    <property type="entry name" value="GIDA"/>
    <property type="match status" value="1"/>
</dbReference>
<dbReference type="SUPFAM" id="SSF51905">
    <property type="entry name" value="FAD/NAD(P)-binding domain"/>
    <property type="match status" value="1"/>
</dbReference>
<evidence type="ECO:0000255" key="1">
    <source>
        <dbReference type="HAMAP-Rule" id="MF_01037"/>
    </source>
</evidence>
<protein>
    <recommendedName>
        <fullName evidence="1">Methylenetetrahydrofolate--tRNA-(uracil-5-)-methyltransferase TrmFO</fullName>
        <ecNumber evidence="1">2.1.1.74</ecNumber>
    </recommendedName>
    <alternativeName>
        <fullName evidence="1">Folate-dependent tRNA (uracil-5-)-methyltransferase</fullName>
    </alternativeName>
    <alternativeName>
        <fullName evidence="1">Folate-dependent tRNA(M-5-U54)-methyltransferase</fullName>
    </alternativeName>
</protein>
<feature type="chain" id="PRO_0000346318" description="Methylenetetrahydrofolate--tRNA-(uracil-5-)-methyltransferase TrmFO">
    <location>
        <begin position="1"/>
        <end position="451"/>
    </location>
</feature>
<feature type="binding site" evidence="1">
    <location>
        <begin position="10"/>
        <end position="15"/>
    </location>
    <ligand>
        <name>FAD</name>
        <dbReference type="ChEBI" id="CHEBI:57692"/>
    </ligand>
</feature>
<organism>
    <name type="scientific">Anaeromyxobacter sp. (strain Fw109-5)</name>
    <dbReference type="NCBI Taxonomy" id="404589"/>
    <lineage>
        <taxon>Bacteria</taxon>
        <taxon>Pseudomonadati</taxon>
        <taxon>Myxococcota</taxon>
        <taxon>Myxococcia</taxon>
        <taxon>Myxococcales</taxon>
        <taxon>Cystobacterineae</taxon>
        <taxon>Anaeromyxobacteraceae</taxon>
        <taxon>Anaeromyxobacter</taxon>
    </lineage>
</organism>
<keyword id="KW-0963">Cytoplasm</keyword>
<keyword id="KW-0274">FAD</keyword>
<keyword id="KW-0285">Flavoprotein</keyword>
<keyword id="KW-0489">Methyltransferase</keyword>
<keyword id="KW-0520">NAD</keyword>
<keyword id="KW-0521">NADP</keyword>
<keyword id="KW-1185">Reference proteome</keyword>
<keyword id="KW-0808">Transferase</keyword>
<keyword id="KW-0819">tRNA processing</keyword>
<gene>
    <name evidence="1" type="primary">trmFO</name>
    <name type="ordered locus">Anae109_2691</name>
</gene>
<name>TRMFO_ANADF</name>